<reference key="1">
    <citation type="journal article" date="2001" name="Nature">
        <title>Genome sequence of enterohaemorrhagic Escherichia coli O157:H7.</title>
        <authorList>
            <person name="Perna N.T."/>
            <person name="Plunkett G. III"/>
            <person name="Burland V."/>
            <person name="Mau B."/>
            <person name="Glasner J.D."/>
            <person name="Rose D.J."/>
            <person name="Mayhew G.F."/>
            <person name="Evans P.S."/>
            <person name="Gregor J."/>
            <person name="Kirkpatrick H.A."/>
            <person name="Posfai G."/>
            <person name="Hackett J."/>
            <person name="Klink S."/>
            <person name="Boutin A."/>
            <person name="Shao Y."/>
            <person name="Miller L."/>
            <person name="Grotbeck E.J."/>
            <person name="Davis N.W."/>
            <person name="Lim A."/>
            <person name="Dimalanta E.T."/>
            <person name="Potamousis K."/>
            <person name="Apodaca J."/>
            <person name="Anantharaman T.S."/>
            <person name="Lin J."/>
            <person name="Yen G."/>
            <person name="Schwartz D.C."/>
            <person name="Welch R.A."/>
            <person name="Blattner F.R."/>
        </authorList>
    </citation>
    <scope>NUCLEOTIDE SEQUENCE [LARGE SCALE GENOMIC DNA]</scope>
    <source>
        <strain>O157:H7 / EDL933 / ATCC 700927 / EHEC</strain>
    </source>
</reference>
<reference key="2">
    <citation type="journal article" date="2001" name="DNA Res.">
        <title>Complete genome sequence of enterohemorrhagic Escherichia coli O157:H7 and genomic comparison with a laboratory strain K-12.</title>
        <authorList>
            <person name="Hayashi T."/>
            <person name="Makino K."/>
            <person name="Ohnishi M."/>
            <person name="Kurokawa K."/>
            <person name="Ishii K."/>
            <person name="Yokoyama K."/>
            <person name="Han C.-G."/>
            <person name="Ohtsubo E."/>
            <person name="Nakayama K."/>
            <person name="Murata T."/>
            <person name="Tanaka M."/>
            <person name="Tobe T."/>
            <person name="Iida T."/>
            <person name="Takami H."/>
            <person name="Honda T."/>
            <person name="Sasakawa C."/>
            <person name="Ogasawara N."/>
            <person name="Yasunaga T."/>
            <person name="Kuhara S."/>
            <person name="Shiba T."/>
            <person name="Hattori M."/>
            <person name="Shinagawa H."/>
        </authorList>
    </citation>
    <scope>NUCLEOTIDE SEQUENCE [LARGE SCALE GENOMIC DNA]</scope>
    <source>
        <strain>O157:H7 / Sakai / RIMD 0509952 / EHEC</strain>
    </source>
</reference>
<feature type="chain" id="PRO_0000349911" description="Ribosomal RNA large subunit methyltransferase F">
    <location>
        <begin position="1"/>
        <end position="308"/>
    </location>
</feature>
<dbReference type="EC" id="2.1.1.181" evidence="1"/>
<dbReference type="EMBL" id="AE005174">
    <property type="protein sequence ID" value="AAG55179.1"/>
    <property type="status" value="ALT_INIT"/>
    <property type="molecule type" value="Genomic_DNA"/>
</dbReference>
<dbReference type="EMBL" id="BA000007">
    <property type="protein sequence ID" value="BAB34308.2"/>
    <property type="molecule type" value="Genomic_DNA"/>
</dbReference>
<dbReference type="PIR" id="E90739">
    <property type="entry name" value="E90739"/>
</dbReference>
<dbReference type="PIR" id="G85589">
    <property type="entry name" value="G85589"/>
</dbReference>
<dbReference type="RefSeq" id="NP_308912.2">
    <property type="nucleotide sequence ID" value="NC_002695.1"/>
</dbReference>
<dbReference type="RefSeq" id="WP_001301511.1">
    <property type="nucleotide sequence ID" value="NZ_VOAI01000006.1"/>
</dbReference>
<dbReference type="SMR" id="Q8X7W6"/>
<dbReference type="STRING" id="155864.Z1028"/>
<dbReference type="GeneID" id="917626"/>
<dbReference type="KEGG" id="ece:Z1028"/>
<dbReference type="KEGG" id="ecs:ECs_0885"/>
<dbReference type="PATRIC" id="fig|386585.9.peg.999"/>
<dbReference type="eggNOG" id="COG3129">
    <property type="taxonomic scope" value="Bacteria"/>
</dbReference>
<dbReference type="HOGENOM" id="CLU_027534_3_0_6"/>
<dbReference type="OMA" id="HQGRYDF"/>
<dbReference type="Proteomes" id="UP000000558">
    <property type="component" value="Chromosome"/>
</dbReference>
<dbReference type="Proteomes" id="UP000002519">
    <property type="component" value="Chromosome"/>
</dbReference>
<dbReference type="GO" id="GO:0005737">
    <property type="term" value="C:cytoplasm"/>
    <property type="evidence" value="ECO:0007669"/>
    <property type="project" value="UniProtKB-SubCell"/>
</dbReference>
<dbReference type="GO" id="GO:0052907">
    <property type="term" value="F:23S rRNA (adenine(1618)-N(6))-methyltransferase activity"/>
    <property type="evidence" value="ECO:0007669"/>
    <property type="project" value="UniProtKB-EC"/>
</dbReference>
<dbReference type="GO" id="GO:0070475">
    <property type="term" value="P:rRNA base methylation"/>
    <property type="evidence" value="ECO:0007669"/>
    <property type="project" value="TreeGrafter"/>
</dbReference>
<dbReference type="FunFam" id="3.40.50.150:FF:000045">
    <property type="entry name" value="Ribosomal RNA large subunit methyltransferase F"/>
    <property type="match status" value="1"/>
</dbReference>
<dbReference type="Gene3D" id="3.40.50.150">
    <property type="entry name" value="Vaccinia Virus protein VP39"/>
    <property type="match status" value="1"/>
</dbReference>
<dbReference type="HAMAP" id="MF_01848">
    <property type="entry name" value="23SrRNA_methyltr_F"/>
    <property type="match status" value="1"/>
</dbReference>
<dbReference type="InterPro" id="IPR010286">
    <property type="entry name" value="METTL16/RlmF"/>
</dbReference>
<dbReference type="InterPro" id="IPR016909">
    <property type="entry name" value="rRNA_lsu_MeTfrase_F"/>
</dbReference>
<dbReference type="InterPro" id="IPR029063">
    <property type="entry name" value="SAM-dependent_MTases_sf"/>
</dbReference>
<dbReference type="NCBIfam" id="NF008725">
    <property type="entry name" value="PRK11727.1"/>
    <property type="match status" value="1"/>
</dbReference>
<dbReference type="PANTHER" id="PTHR13393:SF0">
    <property type="entry name" value="RNA N6-ADENOSINE-METHYLTRANSFERASE METTL16"/>
    <property type="match status" value="1"/>
</dbReference>
<dbReference type="PANTHER" id="PTHR13393">
    <property type="entry name" value="SAM-DEPENDENT METHYLTRANSFERASE"/>
    <property type="match status" value="1"/>
</dbReference>
<dbReference type="Pfam" id="PF05971">
    <property type="entry name" value="Methyltransf_10"/>
    <property type="match status" value="1"/>
</dbReference>
<dbReference type="PIRSF" id="PIRSF029038">
    <property type="entry name" value="Mtase_YbiN_prd"/>
    <property type="match status" value="1"/>
</dbReference>
<dbReference type="SUPFAM" id="SSF53335">
    <property type="entry name" value="S-adenosyl-L-methionine-dependent methyltransferases"/>
    <property type="match status" value="1"/>
</dbReference>
<name>RLMF_ECO57</name>
<keyword id="KW-0963">Cytoplasm</keyword>
<keyword id="KW-0489">Methyltransferase</keyword>
<keyword id="KW-1185">Reference proteome</keyword>
<keyword id="KW-0698">rRNA processing</keyword>
<keyword id="KW-0949">S-adenosyl-L-methionine</keyword>
<keyword id="KW-0808">Transferase</keyword>
<organism>
    <name type="scientific">Escherichia coli O157:H7</name>
    <dbReference type="NCBI Taxonomy" id="83334"/>
    <lineage>
        <taxon>Bacteria</taxon>
        <taxon>Pseudomonadati</taxon>
        <taxon>Pseudomonadota</taxon>
        <taxon>Gammaproteobacteria</taxon>
        <taxon>Enterobacterales</taxon>
        <taxon>Enterobacteriaceae</taxon>
        <taxon>Escherichia</taxon>
    </lineage>
</organism>
<sequence>MSAQKPGLHPRNRHHSRYDLATLCQVNPELKQFLTLTPAGEQSVDFANPLAVKALNKALLAHFYAVANWDIPDGFLCPPVPGRADYIHHLADLLAEASGTIPANASILDIGVGANCIYPLIGVHEYGWRFTGSETSSQALSSAQAIISANPGLNRAIRLRRQKESGAIFNGIIHKNEQYDATLCNPPFHDSAAAARAGSECKRRNLGLNKDDALNFGGQQQELWCEGGEVTFIKKMIEESKGFAKQVMWFTSLVSRGENLPPLYRALTDVGAVKVVKKEMAQGQKQSRFIAWTFMNDEQRRRFVNRQR</sequence>
<proteinExistence type="inferred from homology"/>
<accession>Q8X7W6</accession>
<accession>Q7AGC0</accession>
<gene>
    <name evidence="1" type="primary">rlmF</name>
    <name type="ordered locus">Z1028</name>
    <name type="ordered locus">ECs0885</name>
</gene>
<protein>
    <recommendedName>
        <fullName evidence="1">Ribosomal RNA large subunit methyltransferase F</fullName>
        <ecNumber evidence="1">2.1.1.181</ecNumber>
    </recommendedName>
    <alternativeName>
        <fullName evidence="1">23S rRNA mA1618 methyltransferase</fullName>
    </alternativeName>
    <alternativeName>
        <fullName evidence="1">rRNA adenine N-6-methyltransferase</fullName>
    </alternativeName>
</protein>
<evidence type="ECO:0000255" key="1">
    <source>
        <dbReference type="HAMAP-Rule" id="MF_01848"/>
    </source>
</evidence>
<evidence type="ECO:0000305" key="2"/>
<comment type="function">
    <text evidence="1">Specifically methylates the adenine in position 1618 of 23S rRNA.</text>
</comment>
<comment type="catalytic activity">
    <reaction evidence="1">
        <text>adenosine(1618) in 23S rRNA + S-adenosyl-L-methionine = N(6)-methyladenosine(1618) in 23S rRNA + S-adenosyl-L-homocysteine + H(+)</text>
        <dbReference type="Rhea" id="RHEA:16497"/>
        <dbReference type="Rhea" id="RHEA-COMP:10229"/>
        <dbReference type="Rhea" id="RHEA-COMP:10231"/>
        <dbReference type="ChEBI" id="CHEBI:15378"/>
        <dbReference type="ChEBI" id="CHEBI:57856"/>
        <dbReference type="ChEBI" id="CHEBI:59789"/>
        <dbReference type="ChEBI" id="CHEBI:74411"/>
        <dbReference type="ChEBI" id="CHEBI:74449"/>
        <dbReference type="EC" id="2.1.1.181"/>
    </reaction>
</comment>
<comment type="subcellular location">
    <subcellularLocation>
        <location evidence="1">Cytoplasm</location>
    </subcellularLocation>
</comment>
<comment type="similarity">
    <text evidence="1">Belongs to the methyltransferase superfamily. METTL16/RlmF family.</text>
</comment>
<comment type="sequence caution" evidence="2">
    <conflict type="erroneous initiation">
        <sequence resource="EMBL-CDS" id="AAG55179"/>
    </conflict>
    <text>Extended N-terminus.</text>
</comment>